<sequence>MLHVSASKGMTEYFKNILDDVSNLYNLAEECRKNGYDVTDHVEIPLAKDMADRVEGIVGPKNVAERIRELVSEFGKEPAALEIAKEIVEGKFGEFGREVGAEQAVRTALAVITEGIVAAPLEGIAYVKIKKNSDNSEYLAIYFAGPIRSAGGTAQALAVLVGDYVRKNMGLDRFKPTEDEVERYGEEVDLYQSEVTTFQYQPKAEEIRVAVRNISVEITGEATDDVEVSGHRDLPRVETNQIRGGALLALVEGVLLKAPKILRHVDKLNIEGWNWLKELKSKKEEVIEELEEENDEYNYEDEEDLSQYEDYEVEAVTKFIGEVIAGRPVFSHPSKKGGFRLRYGRSRNTGFATDGFHPAIMYLVDDFMAVGTQLKTERPGKATCVVPVDSIEGPIVKLNDGSVLKIDTVEKAKQYTDEVQEILFLGDILVNYGDFLENNHTVLPSSWCTEWYEKILKSQNLEYTEEFIKNPGQKEAVNYAKITKTPLHPKYTYFWHDISKENISTLRSWVIGGKYNPSNDSWELNYDPEDEEISNAKRYLELIGCPHIVMEEKVEIFEYYPFLYSLGYDFDEKRDMIDNIDEKLQNTKNNMHFINTIAPFEIRRNAYIYVGARMGRPEKAAARKMKPPVNGLFPIGNAGALVRLINKAVDEGKTDEIEIANVKCSCGKVSLYRTCPFCGNSVEPTGPSRIKLPIKDYWYKTLENLKINKPGDVKCIKGMTSKDKIIEPLEKAILRAKNNIYVFKDGTTRFDCTDVPVTHFKPVEIHVPIEKLKSLGYLKDIHGNPLENEDQVLELKVQDVIVPESCMDYFLNVSGFIDDLLEKYYKKDRFYNVNTREDLVGHLIIGMAPHTSAGMVGRIIGYSNANVGYAHPYFHASKRRNCDGDEDAFFLLLDAFMNFSKRFLPDKRGGQMDAPLVLTTILDPKEVDGEVHNMDSMWEYPLEFYEKSLEGIAPKEIKKMMETIEDRLDKDSQYEGIGYTHETSKIDEGPPICAYKTLGSMMEKTSAQLAVAKKIRATDERDVAEKVIQSHFVPDLIGNLRAFSRQGVRCKCGAKYRRMPLKGVCRKCGSRLILTVSKGAVEKYMNVSQTMAEKYDASDYIKQRLEIIKSGIDSLFVNDKRKQVKIEDFFK</sequence>
<keyword id="KW-0235">DNA replication</keyword>
<keyword id="KW-0238">DNA-binding</keyword>
<keyword id="KW-0239">DNA-directed DNA polymerase</keyword>
<keyword id="KW-0269">Exonuclease</keyword>
<keyword id="KW-0378">Hydrolase</keyword>
<keyword id="KW-0511">Multifunctional enzyme</keyword>
<keyword id="KW-0540">Nuclease</keyword>
<keyword id="KW-0548">Nucleotidyltransferase</keyword>
<keyword id="KW-1185">Reference proteome</keyword>
<keyword id="KW-0808">Transferase</keyword>
<gene>
    <name evidence="2" type="primary">polC</name>
    <name type="ordered locus">MMP0026</name>
</gene>
<feature type="chain" id="PRO_0000294686" description="DNA polymerase II large subunit">
    <location>
        <begin position="1"/>
        <end position="1131"/>
    </location>
</feature>
<accession>Q6M191</accession>
<name>DP2L_METMP</name>
<evidence type="ECO:0000250" key="1"/>
<evidence type="ECO:0000255" key="2">
    <source>
        <dbReference type="HAMAP-Rule" id="MF_00324"/>
    </source>
</evidence>
<comment type="function">
    <text evidence="1">Possesses two activities: a DNA synthesis (polymerase) and an exonucleolytic activity that degrades single-stranded DNA in the 3'- to 5'-direction. Has a template-primer preference which is characteristic of a replicative DNA polymerase (By similarity).</text>
</comment>
<comment type="catalytic activity">
    <reaction evidence="2">
        <text>DNA(n) + a 2'-deoxyribonucleoside 5'-triphosphate = DNA(n+1) + diphosphate</text>
        <dbReference type="Rhea" id="RHEA:22508"/>
        <dbReference type="Rhea" id="RHEA-COMP:17339"/>
        <dbReference type="Rhea" id="RHEA-COMP:17340"/>
        <dbReference type="ChEBI" id="CHEBI:33019"/>
        <dbReference type="ChEBI" id="CHEBI:61560"/>
        <dbReference type="ChEBI" id="CHEBI:173112"/>
        <dbReference type="EC" id="2.7.7.7"/>
    </reaction>
</comment>
<comment type="catalytic activity">
    <reaction evidence="2">
        <text>Exonucleolytic cleavage in the 3'- to 5'-direction to yield nucleoside 5'-phosphates.</text>
        <dbReference type="EC" id="3.1.11.1"/>
    </reaction>
</comment>
<comment type="subunit">
    <text evidence="2">Heterodimer of a large subunit and a small subunit.</text>
</comment>
<comment type="similarity">
    <text evidence="2">Belongs to the archaeal DNA polymerase II family.</text>
</comment>
<proteinExistence type="inferred from homology"/>
<dbReference type="EC" id="2.7.7.7" evidence="2"/>
<dbReference type="EC" id="3.1.11.1" evidence="2"/>
<dbReference type="EMBL" id="BX950229">
    <property type="protein sequence ID" value="CAF29582.1"/>
    <property type="molecule type" value="Genomic_DNA"/>
</dbReference>
<dbReference type="RefSeq" id="WP_011169970.1">
    <property type="nucleotide sequence ID" value="NC_005791.1"/>
</dbReference>
<dbReference type="SMR" id="Q6M191"/>
<dbReference type="STRING" id="267377.MMP0026"/>
<dbReference type="EnsemblBacteria" id="CAF29582">
    <property type="protein sequence ID" value="CAF29582"/>
    <property type="gene ID" value="MMP0026"/>
</dbReference>
<dbReference type="GeneID" id="2762226"/>
<dbReference type="KEGG" id="mmp:MMP0026"/>
<dbReference type="PATRIC" id="fig|267377.15.peg.26"/>
<dbReference type="eggNOG" id="arCOG04447">
    <property type="taxonomic scope" value="Archaea"/>
</dbReference>
<dbReference type="HOGENOM" id="CLU_001154_0_0_2"/>
<dbReference type="OrthoDB" id="7529at2157"/>
<dbReference type="Proteomes" id="UP000000590">
    <property type="component" value="Chromosome"/>
</dbReference>
<dbReference type="GO" id="GO:0003677">
    <property type="term" value="F:DNA binding"/>
    <property type="evidence" value="ECO:0007669"/>
    <property type="project" value="UniProtKB-UniRule"/>
</dbReference>
<dbReference type="GO" id="GO:0003887">
    <property type="term" value="F:DNA-directed DNA polymerase activity"/>
    <property type="evidence" value="ECO:0007669"/>
    <property type="project" value="UniProtKB-UniRule"/>
</dbReference>
<dbReference type="GO" id="GO:0008310">
    <property type="term" value="F:single-stranded DNA 3'-5' DNA exonuclease activity"/>
    <property type="evidence" value="ECO:0007669"/>
    <property type="project" value="UniProtKB-EC"/>
</dbReference>
<dbReference type="GO" id="GO:0006308">
    <property type="term" value="P:DNA catabolic process"/>
    <property type="evidence" value="ECO:0007669"/>
    <property type="project" value="UniProtKB-UniRule"/>
</dbReference>
<dbReference type="GO" id="GO:0006261">
    <property type="term" value="P:DNA-templated DNA replication"/>
    <property type="evidence" value="ECO:0007669"/>
    <property type="project" value="UniProtKB-UniRule"/>
</dbReference>
<dbReference type="HAMAP" id="MF_00324">
    <property type="entry name" value="DNApol_II_L_arch"/>
    <property type="match status" value="1"/>
</dbReference>
<dbReference type="InterPro" id="IPR004475">
    <property type="entry name" value="PolC_DP2"/>
</dbReference>
<dbReference type="InterPro" id="IPR056172">
    <property type="entry name" value="PolC_DP2_cat_dom"/>
</dbReference>
<dbReference type="InterPro" id="IPR056171">
    <property type="entry name" value="PolC_DP2_central_dom"/>
</dbReference>
<dbReference type="InterPro" id="IPR016033">
    <property type="entry name" value="PolC_DP2_N"/>
</dbReference>
<dbReference type="NCBIfam" id="TIGR00354">
    <property type="entry name" value="polC"/>
    <property type="match status" value="1"/>
</dbReference>
<dbReference type="NCBIfam" id="NF003103">
    <property type="entry name" value="PRK04023.1"/>
    <property type="match status" value="1"/>
</dbReference>
<dbReference type="PANTHER" id="PTHR42210">
    <property type="entry name" value="DNA POLYMERASE II LARGE SUBUNIT"/>
    <property type="match status" value="1"/>
</dbReference>
<dbReference type="PANTHER" id="PTHR42210:SF1">
    <property type="entry name" value="DNA POLYMERASE II LARGE SUBUNIT"/>
    <property type="match status" value="1"/>
</dbReference>
<dbReference type="Pfam" id="PF24846">
    <property type="entry name" value="PolC_DP2_cat"/>
    <property type="match status" value="1"/>
</dbReference>
<dbReference type="Pfam" id="PF24844">
    <property type="entry name" value="PolC_DP2_central"/>
    <property type="match status" value="1"/>
</dbReference>
<dbReference type="Pfam" id="PF03833">
    <property type="entry name" value="PolC_DP2_N"/>
    <property type="match status" value="1"/>
</dbReference>
<dbReference type="PIRSF" id="PIRSF016275">
    <property type="entry name" value="PolC_DP2"/>
    <property type="match status" value="1"/>
</dbReference>
<protein>
    <recommendedName>
        <fullName evidence="2">DNA polymerase II large subunit</fullName>
        <shortName evidence="2">Pol II</shortName>
        <ecNumber evidence="2">2.7.7.7</ecNumber>
    </recommendedName>
    <alternativeName>
        <fullName evidence="2">Exodeoxyribonuclease large subunit</fullName>
        <ecNumber evidence="2">3.1.11.1</ecNumber>
    </alternativeName>
</protein>
<reference key="1">
    <citation type="journal article" date="2004" name="J. Bacteriol.">
        <title>Complete genome sequence of the genetically tractable hydrogenotrophic methanogen Methanococcus maripaludis.</title>
        <authorList>
            <person name="Hendrickson E.L."/>
            <person name="Kaul R."/>
            <person name="Zhou Y."/>
            <person name="Bovee D."/>
            <person name="Chapman P."/>
            <person name="Chung J."/>
            <person name="Conway de Macario E."/>
            <person name="Dodsworth J.A."/>
            <person name="Gillett W."/>
            <person name="Graham D.E."/>
            <person name="Hackett M."/>
            <person name="Haydock A.K."/>
            <person name="Kang A."/>
            <person name="Land M.L."/>
            <person name="Levy R."/>
            <person name="Lie T.J."/>
            <person name="Major T.A."/>
            <person name="Moore B.C."/>
            <person name="Porat I."/>
            <person name="Palmeiri A."/>
            <person name="Rouse G."/>
            <person name="Saenphimmachak C."/>
            <person name="Soell D."/>
            <person name="Van Dien S."/>
            <person name="Wang T."/>
            <person name="Whitman W.B."/>
            <person name="Xia Q."/>
            <person name="Zhang Y."/>
            <person name="Larimer F.W."/>
            <person name="Olson M.V."/>
            <person name="Leigh J.A."/>
        </authorList>
    </citation>
    <scope>NUCLEOTIDE SEQUENCE [LARGE SCALE GENOMIC DNA]</scope>
    <source>
        <strain>DSM 14266 / JCM 13030 / NBRC 101832 / S2 / LL</strain>
    </source>
</reference>
<organism>
    <name type="scientific">Methanococcus maripaludis (strain DSM 14266 / JCM 13030 / NBRC 101832 / S2 / LL)</name>
    <dbReference type="NCBI Taxonomy" id="267377"/>
    <lineage>
        <taxon>Archaea</taxon>
        <taxon>Methanobacteriati</taxon>
        <taxon>Methanobacteriota</taxon>
        <taxon>Methanomada group</taxon>
        <taxon>Methanococci</taxon>
        <taxon>Methanococcales</taxon>
        <taxon>Methanococcaceae</taxon>
        <taxon>Methanococcus</taxon>
    </lineage>
</organism>